<gene>
    <name type="primary">GB1</name>
</gene>
<dbReference type="EMBL" id="U12233">
    <property type="protein sequence ID" value="AAA50446.1"/>
    <property type="molecule type" value="mRNA"/>
</dbReference>
<dbReference type="PIR" id="T02085">
    <property type="entry name" value="T02085"/>
</dbReference>
<dbReference type="RefSeq" id="NP_001105365.1">
    <property type="nucleotide sequence ID" value="NM_001111895.1"/>
</dbReference>
<dbReference type="SMR" id="P49178"/>
<dbReference type="FunCoup" id="P49178">
    <property type="interactions" value="2794"/>
</dbReference>
<dbReference type="STRING" id="4577.P49178"/>
<dbReference type="PaxDb" id="4577-GRMZM2G045314_P03"/>
<dbReference type="EnsemblPlants" id="Zm00001eb052290_T001">
    <property type="protein sequence ID" value="Zm00001eb052290_P001"/>
    <property type="gene ID" value="Zm00001eb052290"/>
</dbReference>
<dbReference type="GeneID" id="542310"/>
<dbReference type="Gramene" id="Zm00001eb052290_T001">
    <property type="protein sequence ID" value="Zm00001eb052290_P001"/>
    <property type="gene ID" value="Zm00001eb052290"/>
</dbReference>
<dbReference type="KEGG" id="zma:542310"/>
<dbReference type="MaizeGDB" id="105669"/>
<dbReference type="eggNOG" id="KOG0286">
    <property type="taxonomic scope" value="Eukaryota"/>
</dbReference>
<dbReference type="InParanoid" id="P49178"/>
<dbReference type="OMA" id="PLDSQWV"/>
<dbReference type="OrthoDB" id="10255630at2759"/>
<dbReference type="Proteomes" id="UP000007305">
    <property type="component" value="Chromosome 1"/>
</dbReference>
<dbReference type="ExpressionAtlas" id="P49178">
    <property type="expression patterns" value="baseline and differential"/>
</dbReference>
<dbReference type="GO" id="GO:0080008">
    <property type="term" value="C:Cul4-RING E3 ubiquitin ligase complex"/>
    <property type="evidence" value="ECO:0007669"/>
    <property type="project" value="EnsemblPlants"/>
</dbReference>
<dbReference type="GO" id="GO:0005737">
    <property type="term" value="C:cytoplasm"/>
    <property type="evidence" value="ECO:0000318"/>
    <property type="project" value="GO_Central"/>
</dbReference>
<dbReference type="GO" id="GO:0005783">
    <property type="term" value="C:endoplasmic reticulum"/>
    <property type="evidence" value="ECO:0007669"/>
    <property type="project" value="EnsemblPlants"/>
</dbReference>
<dbReference type="GO" id="GO:0005834">
    <property type="term" value="C:heterotrimeric G-protein complex"/>
    <property type="evidence" value="ECO:0000318"/>
    <property type="project" value="GO_Central"/>
</dbReference>
<dbReference type="GO" id="GO:0030159">
    <property type="term" value="F:signaling receptor complex adaptor activity"/>
    <property type="evidence" value="ECO:0000318"/>
    <property type="project" value="GO_Central"/>
</dbReference>
<dbReference type="GO" id="GO:0050832">
    <property type="term" value="P:defense response to fungus"/>
    <property type="evidence" value="ECO:0007669"/>
    <property type="project" value="EnsemblPlants"/>
</dbReference>
<dbReference type="GO" id="GO:0030968">
    <property type="term" value="P:endoplasmic reticulum unfolded protein response"/>
    <property type="evidence" value="ECO:0007669"/>
    <property type="project" value="EnsemblPlants"/>
</dbReference>
<dbReference type="GO" id="GO:0010154">
    <property type="term" value="P:fruit development"/>
    <property type="evidence" value="ECO:0007669"/>
    <property type="project" value="EnsemblPlants"/>
</dbReference>
<dbReference type="GO" id="GO:0007186">
    <property type="term" value="P:G protein-coupled receptor signaling pathway"/>
    <property type="evidence" value="ECO:0000318"/>
    <property type="project" value="GO_Central"/>
</dbReference>
<dbReference type="GO" id="GO:0009867">
    <property type="term" value="P:jasmonic acid mediated signaling pathway"/>
    <property type="evidence" value="ECO:0007669"/>
    <property type="project" value="EnsemblPlants"/>
</dbReference>
<dbReference type="GO" id="GO:0048527">
    <property type="term" value="P:lateral root development"/>
    <property type="evidence" value="ECO:0007669"/>
    <property type="project" value="EnsemblPlants"/>
</dbReference>
<dbReference type="GO" id="GO:1905392">
    <property type="term" value="P:plant organ morphogenesis"/>
    <property type="evidence" value="ECO:0007669"/>
    <property type="project" value="EnsemblPlants"/>
</dbReference>
<dbReference type="GO" id="GO:0072593">
    <property type="term" value="P:reactive oxygen species metabolic process"/>
    <property type="evidence" value="ECO:0007669"/>
    <property type="project" value="EnsemblPlants"/>
</dbReference>
<dbReference type="GO" id="GO:2000280">
    <property type="term" value="P:regulation of root development"/>
    <property type="evidence" value="ECO:0007669"/>
    <property type="project" value="EnsemblPlants"/>
</dbReference>
<dbReference type="GO" id="GO:0009723">
    <property type="term" value="P:response to ethylene"/>
    <property type="evidence" value="ECO:0007669"/>
    <property type="project" value="EnsemblPlants"/>
</dbReference>
<dbReference type="GO" id="GO:0009845">
    <property type="term" value="P:seed germination"/>
    <property type="evidence" value="ECO:0007669"/>
    <property type="project" value="EnsemblPlants"/>
</dbReference>
<dbReference type="GO" id="GO:0010118">
    <property type="term" value="P:stomatal movement"/>
    <property type="evidence" value="ECO:0007669"/>
    <property type="project" value="EnsemblPlants"/>
</dbReference>
<dbReference type="CDD" id="cd00200">
    <property type="entry name" value="WD40"/>
    <property type="match status" value="1"/>
</dbReference>
<dbReference type="FunFam" id="2.130.10.10:FF:000580">
    <property type="entry name" value="Guanine nucleotide-binding protein subunit beta"/>
    <property type="match status" value="1"/>
</dbReference>
<dbReference type="Gene3D" id="2.130.10.10">
    <property type="entry name" value="YVTN repeat-like/Quinoprotein amine dehydrogenase"/>
    <property type="match status" value="1"/>
</dbReference>
<dbReference type="InterPro" id="IPR020472">
    <property type="entry name" value="G-protein_beta_WD-40_rep"/>
</dbReference>
<dbReference type="InterPro" id="IPR001632">
    <property type="entry name" value="Gprotein_B"/>
</dbReference>
<dbReference type="InterPro" id="IPR016346">
    <property type="entry name" value="Guanine_nucleotide-bd_bsu"/>
</dbReference>
<dbReference type="InterPro" id="IPR015943">
    <property type="entry name" value="WD40/YVTN_repeat-like_dom_sf"/>
</dbReference>
<dbReference type="InterPro" id="IPR019775">
    <property type="entry name" value="WD40_repeat_CS"/>
</dbReference>
<dbReference type="InterPro" id="IPR036322">
    <property type="entry name" value="WD40_repeat_dom_sf"/>
</dbReference>
<dbReference type="InterPro" id="IPR001680">
    <property type="entry name" value="WD40_rpt"/>
</dbReference>
<dbReference type="PANTHER" id="PTHR19850">
    <property type="entry name" value="GUANINE NUCLEOTIDE-BINDING PROTEIN BETA G PROTEIN BETA"/>
    <property type="match status" value="1"/>
</dbReference>
<dbReference type="Pfam" id="PF25391">
    <property type="entry name" value="WD40_Gbeta"/>
    <property type="match status" value="1"/>
</dbReference>
<dbReference type="PIRSF" id="PIRSF002394">
    <property type="entry name" value="GN-bd_beta"/>
    <property type="match status" value="1"/>
</dbReference>
<dbReference type="PRINTS" id="PR00319">
    <property type="entry name" value="GPROTEINB"/>
</dbReference>
<dbReference type="PRINTS" id="PR00320">
    <property type="entry name" value="GPROTEINBRPT"/>
</dbReference>
<dbReference type="SMART" id="SM00320">
    <property type="entry name" value="WD40"/>
    <property type="match status" value="7"/>
</dbReference>
<dbReference type="SUPFAM" id="SSF50978">
    <property type="entry name" value="WD40 repeat-like"/>
    <property type="match status" value="1"/>
</dbReference>
<dbReference type="PROSITE" id="PS00678">
    <property type="entry name" value="WD_REPEATS_1"/>
    <property type="match status" value="3"/>
</dbReference>
<dbReference type="PROSITE" id="PS50082">
    <property type="entry name" value="WD_REPEATS_2"/>
    <property type="match status" value="5"/>
</dbReference>
<dbReference type="PROSITE" id="PS50294">
    <property type="entry name" value="WD_REPEATS_REGION"/>
    <property type="match status" value="1"/>
</dbReference>
<evidence type="ECO:0000305" key="1"/>
<accession>P49178</accession>
<organism>
    <name type="scientific">Zea mays</name>
    <name type="common">Maize</name>
    <dbReference type="NCBI Taxonomy" id="4577"/>
    <lineage>
        <taxon>Eukaryota</taxon>
        <taxon>Viridiplantae</taxon>
        <taxon>Streptophyta</taxon>
        <taxon>Embryophyta</taxon>
        <taxon>Tracheophyta</taxon>
        <taxon>Spermatophyta</taxon>
        <taxon>Magnoliopsida</taxon>
        <taxon>Liliopsida</taxon>
        <taxon>Poales</taxon>
        <taxon>Poaceae</taxon>
        <taxon>PACMAD clade</taxon>
        <taxon>Panicoideae</taxon>
        <taxon>Andropogonodae</taxon>
        <taxon>Andropogoneae</taxon>
        <taxon>Tripsacinae</taxon>
        <taxon>Zea</taxon>
    </lineage>
</organism>
<protein>
    <recommendedName>
        <fullName>Guanine nucleotide-binding protein subunit beta</fullName>
    </recommendedName>
</protein>
<comment type="function">
    <text>Guanine nucleotide-binding proteins (G proteins) are involved as a modulator or transducer in various transmembrane signaling systems. The beta and gamma chains are required for the GTPase activity, for replacement of GDP by GTP, and for G protein-effector interaction.</text>
</comment>
<comment type="subunit">
    <text>G proteins are composed of 3 units, alpha, beta and gamma.</text>
</comment>
<comment type="tissue specificity">
    <text>Present in the root, leaf and tassel.</text>
</comment>
<comment type="similarity">
    <text evidence="1">Belongs to the WD repeat G protein beta family.</text>
</comment>
<sequence length="380" mass="41715">MASVAELKEKHAAATASVNSLRERLRQRRETLLDTDVARYSKSQGRVPVSFNPTDLVCCRTLQGHSGKVYSLDWTPEKNWIVSASQDGRLIVWNALTSQKTHAIKLHCPWVMACAFAPNGQSVACGGLDSACSIFNLNSQADRDGNMPVSRILTGHKGYVSSCQYVPDQETRLITSSGDQTCVLWDVTTGQRISIFGGEFPSGHTADVQSVSINSSNTNMFVSGSCDTTVRLWDIRIASRAVRTYHGHEDDVNSVKFFPDGHRFGTGSDDGTCRLFDMRTGHQLQVYSREPDRNSNELPTVTSIAFSISGRLLFAGYSNGDCYVWDTLLAEVVLNLGNLQNSHDGRISCLGMSSDGSALCTGSWDKNLKIWAFSGHRKIV</sequence>
<keyword id="KW-1185">Reference proteome</keyword>
<keyword id="KW-0677">Repeat</keyword>
<keyword id="KW-0807">Transducer</keyword>
<keyword id="KW-0853">WD repeat</keyword>
<feature type="chain" id="PRO_0000127723" description="Guanine nucleotide-binding protein subunit beta">
    <location>
        <begin position="1"/>
        <end position="380"/>
    </location>
</feature>
<feature type="repeat" description="WD 1">
    <location>
        <begin position="64"/>
        <end position="94"/>
    </location>
</feature>
<feature type="repeat" description="WD 2">
    <location>
        <begin position="106"/>
        <end position="136"/>
    </location>
</feature>
<feature type="repeat" description="WD 3">
    <location>
        <begin position="155"/>
        <end position="186"/>
    </location>
</feature>
<feature type="repeat" description="WD 4">
    <location>
        <begin position="203"/>
        <end position="234"/>
    </location>
</feature>
<feature type="repeat" description="WD 5">
    <location>
        <begin position="247"/>
        <end position="277"/>
    </location>
</feature>
<feature type="repeat" description="WD 6">
    <location>
        <begin position="296"/>
        <end position="326"/>
    </location>
</feature>
<feature type="repeat" description="WD 7">
    <location>
        <begin position="342"/>
        <end position="372"/>
    </location>
</feature>
<proteinExistence type="evidence at transcript level"/>
<reference key="1">
    <citation type="journal article" date="1994" name="Proc. Natl. Acad. Sci. U.S.A.">
        <title>Isolation of cDNAs encoding guanine nucleotide-binding protein beta-subunit homologues from maize (ZGB1) and Arabidopsis (AGB1).</title>
        <authorList>
            <person name="Weiss C.A."/>
            <person name="Garnaat C.W."/>
            <person name="Mukai K."/>
            <person name="Hu Y."/>
            <person name="Ma H."/>
        </authorList>
    </citation>
    <scope>NUCLEOTIDE SEQUENCE [MRNA]</scope>
</reference>
<name>GBB_MAIZE</name>